<reference key="1">
    <citation type="journal article" date="2010" name="PLoS Genet.">
        <title>De novo assembly of a 40 Mb eukaryotic genome from short sequence reads: Sordaria macrospora, a model organism for fungal morphogenesis.</title>
        <authorList>
            <person name="Nowrousian M."/>
            <person name="Stajich J.E."/>
            <person name="Chu M."/>
            <person name="Engh I."/>
            <person name="Espagne E."/>
            <person name="Halliday K."/>
            <person name="Kamerewerd J."/>
            <person name="Kempken F."/>
            <person name="Knab B."/>
            <person name="Kuo H.-C."/>
            <person name="Osiewacz H.D."/>
            <person name="Poeggeler S."/>
            <person name="Read N.D."/>
            <person name="Seiler S."/>
            <person name="Smith K.M."/>
            <person name="Zickler D."/>
            <person name="Kueck U."/>
            <person name="Freitag M."/>
        </authorList>
    </citation>
    <scope>NUCLEOTIDE SEQUENCE [LARGE SCALE GENOMIC DNA]</scope>
    <source>
        <strain>ATCC MYA-333 / DSM 997 / K(L3346) / K-hell</strain>
    </source>
</reference>
<accession>D1ZPB8</accession>
<accession>F7W7I1</accession>
<feature type="chain" id="PRO_0000394013" description="Enolase-phosphatase E1">
    <location>
        <begin position="1"/>
        <end position="234"/>
    </location>
</feature>
<feature type="binding site" evidence="1">
    <location>
        <position position="10"/>
    </location>
    <ligand>
        <name>Mg(2+)</name>
        <dbReference type="ChEBI" id="CHEBI:18420"/>
    </ligand>
</feature>
<feature type="binding site" evidence="1">
    <location>
        <position position="12"/>
    </location>
    <ligand>
        <name>Mg(2+)</name>
        <dbReference type="ChEBI" id="CHEBI:18420"/>
    </ligand>
</feature>
<feature type="binding site" evidence="1">
    <location>
        <begin position="125"/>
        <end position="126"/>
    </location>
    <ligand>
        <name>substrate</name>
    </ligand>
</feature>
<feature type="binding site" evidence="1">
    <location>
        <position position="162"/>
    </location>
    <ligand>
        <name>substrate</name>
    </ligand>
</feature>
<feature type="binding site" evidence="1">
    <location>
        <position position="188"/>
    </location>
    <ligand>
        <name>Mg(2+)</name>
        <dbReference type="ChEBI" id="CHEBI:18420"/>
    </ligand>
</feature>
<protein>
    <recommendedName>
        <fullName evidence="1">Enolase-phosphatase E1</fullName>
        <ecNumber evidence="1">3.1.3.77</ecNumber>
    </recommendedName>
    <alternativeName>
        <fullName evidence="1">2,3-diketo-5-methylthio-1-phosphopentane phosphatase</fullName>
    </alternativeName>
</protein>
<keyword id="KW-0028">Amino-acid biosynthesis</keyword>
<keyword id="KW-0963">Cytoplasm</keyword>
<keyword id="KW-0378">Hydrolase</keyword>
<keyword id="KW-0460">Magnesium</keyword>
<keyword id="KW-0479">Metal-binding</keyword>
<keyword id="KW-0486">Methionine biosynthesis</keyword>
<keyword id="KW-0539">Nucleus</keyword>
<keyword id="KW-1185">Reference proteome</keyword>
<proteinExistence type="inferred from homology"/>
<comment type="function">
    <text evidence="1">Bifunctional enzyme that catalyzes the enolization of 2,3-diketo-5-methylthiopentyl-1-phosphate (DK-MTP-1-P) into the intermediate 2-hydroxy-3-keto-5-methylthiopentenyl-1-phosphate (HK-MTPenyl-1-P), which is then dephosphorylated to form the acireductone 1,2-dihydroxy-3-keto-5-methylthiopentene (DHK-MTPene).</text>
</comment>
<comment type="catalytic activity">
    <reaction evidence="1">
        <text>5-methylsulfanyl-2,3-dioxopentyl phosphate + H2O = 1,2-dihydroxy-5-(methylsulfanyl)pent-1-en-3-one + phosphate</text>
        <dbReference type="Rhea" id="RHEA:21700"/>
        <dbReference type="ChEBI" id="CHEBI:15377"/>
        <dbReference type="ChEBI" id="CHEBI:43474"/>
        <dbReference type="ChEBI" id="CHEBI:49252"/>
        <dbReference type="ChEBI" id="CHEBI:58828"/>
        <dbReference type="EC" id="3.1.3.77"/>
    </reaction>
</comment>
<comment type="cofactor">
    <cofactor evidence="1">
        <name>Mg(2+)</name>
        <dbReference type="ChEBI" id="CHEBI:18420"/>
    </cofactor>
    <text evidence="1">Binds 1 Mg(2+) ion per subunit.</text>
</comment>
<comment type="pathway">
    <text evidence="1">Amino-acid biosynthesis; L-methionine biosynthesis via salvage pathway; L-methionine from S-methyl-5-thio-alpha-D-ribose 1-phosphate: step 3/6.</text>
</comment>
<comment type="pathway">
    <text evidence="1">Amino-acid biosynthesis; L-methionine biosynthesis via salvage pathway; L-methionine from S-methyl-5-thio-alpha-D-ribose 1-phosphate: step 4/6.</text>
</comment>
<comment type="subunit">
    <text evidence="1">Monomer.</text>
</comment>
<comment type="subcellular location">
    <subcellularLocation>
        <location evidence="1">Cytoplasm</location>
    </subcellularLocation>
    <subcellularLocation>
        <location evidence="1">Nucleus</location>
    </subcellularLocation>
</comment>
<comment type="similarity">
    <text evidence="1">Belongs to the HAD-like hydrolase superfamily. MasA/MtnC family.</text>
</comment>
<comment type="sequence caution" evidence="2">
    <conflict type="erroneous initiation">
        <sequence resource="EMBL-CDS" id="CCC13465"/>
    </conflict>
    <text>Extended N-terminus.</text>
</comment>
<dbReference type="EC" id="3.1.3.77" evidence="1"/>
<dbReference type="EMBL" id="CABT02000039">
    <property type="protein sequence ID" value="CCC13465.1"/>
    <property type="status" value="ALT_INIT"/>
    <property type="molecule type" value="Genomic_DNA"/>
</dbReference>
<dbReference type="SMR" id="D1ZPB8"/>
<dbReference type="FunCoup" id="D1ZPB8">
    <property type="interactions" value="601"/>
</dbReference>
<dbReference type="STRING" id="771870.D1ZPB8"/>
<dbReference type="VEuPathDB" id="FungiDB:SMAC_07089"/>
<dbReference type="eggNOG" id="KOG2630">
    <property type="taxonomic scope" value="Eukaryota"/>
</dbReference>
<dbReference type="HOGENOM" id="CLU_023273_0_0_1"/>
<dbReference type="InParanoid" id="D1ZPB8"/>
<dbReference type="OrthoDB" id="272500at2759"/>
<dbReference type="UniPathway" id="UPA00904">
    <property type="reaction ID" value="UER00876"/>
</dbReference>
<dbReference type="UniPathway" id="UPA00904">
    <property type="reaction ID" value="UER00877"/>
</dbReference>
<dbReference type="Proteomes" id="UP000001881">
    <property type="component" value="Unassembled WGS sequence"/>
</dbReference>
<dbReference type="GO" id="GO:0005737">
    <property type="term" value="C:cytoplasm"/>
    <property type="evidence" value="ECO:0007669"/>
    <property type="project" value="UniProtKB-SubCell"/>
</dbReference>
<dbReference type="GO" id="GO:0005634">
    <property type="term" value="C:nucleus"/>
    <property type="evidence" value="ECO:0007669"/>
    <property type="project" value="UniProtKB-SubCell"/>
</dbReference>
<dbReference type="GO" id="GO:0043874">
    <property type="term" value="F:acireductone synthase activity"/>
    <property type="evidence" value="ECO:0007669"/>
    <property type="project" value="UniProtKB-EC"/>
</dbReference>
<dbReference type="GO" id="GO:0000287">
    <property type="term" value="F:magnesium ion binding"/>
    <property type="evidence" value="ECO:0007669"/>
    <property type="project" value="UniProtKB-UniRule"/>
</dbReference>
<dbReference type="GO" id="GO:0019509">
    <property type="term" value="P:L-methionine salvage from methylthioadenosine"/>
    <property type="evidence" value="ECO:0007669"/>
    <property type="project" value="UniProtKB-UniRule"/>
</dbReference>
<dbReference type="CDD" id="cd01629">
    <property type="entry name" value="HAD_EP"/>
    <property type="match status" value="1"/>
</dbReference>
<dbReference type="FunFam" id="1.10.720.60:FF:000007">
    <property type="entry name" value="Enolase-phosphatase E1"/>
    <property type="match status" value="1"/>
</dbReference>
<dbReference type="Gene3D" id="1.10.720.60">
    <property type="match status" value="1"/>
</dbReference>
<dbReference type="Gene3D" id="3.40.50.1000">
    <property type="entry name" value="HAD superfamily/HAD-like"/>
    <property type="match status" value="1"/>
</dbReference>
<dbReference type="HAMAP" id="MF_03117">
    <property type="entry name" value="Salvage_MtnC_euk"/>
    <property type="match status" value="1"/>
</dbReference>
<dbReference type="InterPro" id="IPR023943">
    <property type="entry name" value="Enolase-ppase_E1"/>
</dbReference>
<dbReference type="InterPro" id="IPR027511">
    <property type="entry name" value="ENOPH1_eukaryotes"/>
</dbReference>
<dbReference type="InterPro" id="IPR036412">
    <property type="entry name" value="HAD-like_sf"/>
</dbReference>
<dbReference type="InterPro" id="IPR006439">
    <property type="entry name" value="HAD-SF_hydro_IA"/>
</dbReference>
<dbReference type="InterPro" id="IPR023214">
    <property type="entry name" value="HAD_sf"/>
</dbReference>
<dbReference type="NCBIfam" id="TIGR01691">
    <property type="entry name" value="enolase-ppase"/>
    <property type="match status" value="1"/>
</dbReference>
<dbReference type="NCBIfam" id="TIGR01549">
    <property type="entry name" value="HAD-SF-IA-v1"/>
    <property type="match status" value="1"/>
</dbReference>
<dbReference type="PANTHER" id="PTHR20371">
    <property type="entry name" value="ENOLASE-PHOSPHATASE E1"/>
    <property type="match status" value="1"/>
</dbReference>
<dbReference type="PANTHER" id="PTHR20371:SF1">
    <property type="entry name" value="ENOLASE-PHOSPHATASE E1"/>
    <property type="match status" value="1"/>
</dbReference>
<dbReference type="Pfam" id="PF00702">
    <property type="entry name" value="Hydrolase"/>
    <property type="match status" value="1"/>
</dbReference>
<dbReference type="SFLD" id="SFLDG01133">
    <property type="entry name" value="C1.5.4:_Enolase-phosphatase_Li"/>
    <property type="match status" value="1"/>
</dbReference>
<dbReference type="SFLD" id="SFLDS00003">
    <property type="entry name" value="Haloacid_Dehalogenase"/>
    <property type="match status" value="1"/>
</dbReference>
<dbReference type="SUPFAM" id="SSF56784">
    <property type="entry name" value="HAD-like"/>
    <property type="match status" value="1"/>
</dbReference>
<name>ENOPH_SORMK</name>
<organism>
    <name type="scientific">Sordaria macrospora (strain ATCC MYA-333 / DSM 997 / K(L3346) / K-hell)</name>
    <dbReference type="NCBI Taxonomy" id="771870"/>
    <lineage>
        <taxon>Eukaryota</taxon>
        <taxon>Fungi</taxon>
        <taxon>Dikarya</taxon>
        <taxon>Ascomycota</taxon>
        <taxon>Pezizomycotina</taxon>
        <taxon>Sordariomycetes</taxon>
        <taxon>Sordariomycetidae</taxon>
        <taxon>Sordariales</taxon>
        <taxon>Sordariaceae</taxon>
        <taxon>Sordaria</taxon>
    </lineage>
</organism>
<gene>
    <name evidence="1" type="primary">UTR4</name>
    <name type="ORF">SMAC_07089</name>
</gene>
<evidence type="ECO:0000255" key="1">
    <source>
        <dbReference type="HAMAP-Rule" id="MF_03117"/>
    </source>
</evidence>
<evidence type="ECO:0000305" key="2"/>
<sequence length="234" mass="25985">MAPVKVVLLDIEGTVCPISFVKDVLFPYALEALPGTLKAKWDSPGFASYRAAFPAEHAGSQETLAAHVRDLMSKDLKISYLKSLQGYLWETGYRNGELKAPLFADVAPQLARWREHNGAKVMIYSSGSVPAQKLLFGHTNGEPSDILPWLSDFFDTVNAGPKQEKASYEKIAAKHQEYPIGEWLFLSDNVKEVEAAKQAGMQSYIVDRPGNAELSEEARKEHRVVKSFEEIGDL</sequence>